<proteinExistence type="evidence at protein level"/>
<name>ILI4_ORYSJ</name>
<gene>
    <name type="primary">ILI4</name>
    <name evidence="6" type="synonym">BHLH172</name>
    <name evidence="5 7 8" type="synonym">BU1</name>
    <name evidence="9" type="ordered locus">Os06g0226500</name>
    <name evidence="9" type="ordered locus">LOC_Os06g12210</name>
    <name evidence="11" type="ORF">OsJ_20669</name>
</gene>
<dbReference type="EMBL" id="AP008212">
    <property type="protein sequence ID" value="BAF19117.1"/>
    <property type="molecule type" value="Genomic_DNA"/>
</dbReference>
<dbReference type="EMBL" id="AP014962">
    <property type="protein sequence ID" value="BAS96875.1"/>
    <property type="molecule type" value="Genomic_DNA"/>
</dbReference>
<dbReference type="EMBL" id="CM000143">
    <property type="protein sequence ID" value="EAZ36342.1"/>
    <property type="molecule type" value="Genomic_DNA"/>
</dbReference>
<dbReference type="EMBL" id="AK071601">
    <property type="protein sequence ID" value="BAG92577.1"/>
    <property type="molecule type" value="mRNA"/>
</dbReference>
<dbReference type="RefSeq" id="XP_015642646.1">
    <property type="nucleotide sequence ID" value="XM_015787160.1"/>
</dbReference>
<dbReference type="SMR" id="Q0DDF6"/>
<dbReference type="FunCoup" id="Q0DDF6">
    <property type="interactions" value="212"/>
</dbReference>
<dbReference type="STRING" id="39947.Q0DDF6"/>
<dbReference type="PaxDb" id="39947-Q0DDF6"/>
<dbReference type="EnsemblPlants" id="Os06t0226500-01">
    <property type="protein sequence ID" value="Os06t0226500-01"/>
    <property type="gene ID" value="Os06g0226500"/>
</dbReference>
<dbReference type="Gramene" id="Os06t0226500-01">
    <property type="protein sequence ID" value="Os06t0226500-01"/>
    <property type="gene ID" value="Os06g0226500"/>
</dbReference>
<dbReference type="KEGG" id="dosa:Os06g0226500"/>
<dbReference type="eggNOG" id="ENOG502SURH">
    <property type="taxonomic scope" value="Eukaryota"/>
</dbReference>
<dbReference type="HOGENOM" id="CLU_183267_0_0_1"/>
<dbReference type="InParanoid" id="Q0DDF6"/>
<dbReference type="OMA" id="QTCNYIK"/>
<dbReference type="OrthoDB" id="988630at2759"/>
<dbReference type="Proteomes" id="UP000000763">
    <property type="component" value="Chromosome 6"/>
</dbReference>
<dbReference type="Proteomes" id="UP000007752">
    <property type="component" value="Chromosome 6"/>
</dbReference>
<dbReference type="Proteomes" id="UP000059680">
    <property type="component" value="Chromosome 6"/>
</dbReference>
<dbReference type="GO" id="GO:0005737">
    <property type="term" value="C:cytoplasm"/>
    <property type="evidence" value="ECO:0000314"/>
    <property type="project" value="UniProtKB"/>
</dbReference>
<dbReference type="GO" id="GO:0005634">
    <property type="term" value="C:nucleus"/>
    <property type="evidence" value="ECO:0000314"/>
    <property type="project" value="UniProtKB"/>
</dbReference>
<dbReference type="GO" id="GO:0046983">
    <property type="term" value="F:protein dimerization activity"/>
    <property type="evidence" value="ECO:0007669"/>
    <property type="project" value="InterPro"/>
</dbReference>
<dbReference type="GO" id="GO:0009742">
    <property type="term" value="P:brassinosteroid mediated signaling pathway"/>
    <property type="evidence" value="ECO:0007669"/>
    <property type="project" value="UniProtKB-KW"/>
</dbReference>
<dbReference type="GO" id="GO:0016036">
    <property type="term" value="P:cellular response to phosphate starvation"/>
    <property type="evidence" value="ECO:0000270"/>
    <property type="project" value="UniProtKB"/>
</dbReference>
<dbReference type="GO" id="GO:0051511">
    <property type="term" value="P:negative regulation of unidimensional cell growth"/>
    <property type="evidence" value="ECO:0000315"/>
    <property type="project" value="UniProtKB"/>
</dbReference>
<dbReference type="GO" id="GO:0006355">
    <property type="term" value="P:regulation of DNA-templated transcription"/>
    <property type="evidence" value="ECO:0007669"/>
    <property type="project" value="InterPro"/>
</dbReference>
<dbReference type="GO" id="GO:2000024">
    <property type="term" value="P:regulation of leaf development"/>
    <property type="evidence" value="ECO:0000315"/>
    <property type="project" value="UniProtKB"/>
</dbReference>
<dbReference type="GO" id="GO:0009741">
    <property type="term" value="P:response to brassinosteroid"/>
    <property type="evidence" value="ECO:0000315"/>
    <property type="project" value="UniProtKB"/>
</dbReference>
<dbReference type="FunFam" id="4.10.280.10:FF:000106">
    <property type="entry name" value="Transcription factor ILI5"/>
    <property type="match status" value="1"/>
</dbReference>
<dbReference type="Gene3D" id="4.10.280.10">
    <property type="entry name" value="Helix-loop-helix DNA-binding domain"/>
    <property type="match status" value="1"/>
</dbReference>
<dbReference type="InterPro" id="IPR011598">
    <property type="entry name" value="bHLH_dom"/>
</dbReference>
<dbReference type="InterPro" id="IPR036638">
    <property type="entry name" value="HLH_DNA-bd_sf"/>
</dbReference>
<dbReference type="InterPro" id="IPR044293">
    <property type="entry name" value="PRE"/>
</dbReference>
<dbReference type="PANTHER" id="PTHR46446:SF31">
    <property type="entry name" value="TRANSCRIPTION FACTOR ILI4"/>
    <property type="match status" value="1"/>
</dbReference>
<dbReference type="PANTHER" id="PTHR46446">
    <property type="entry name" value="TRANSCRIPTION FACTOR PRE"/>
    <property type="match status" value="1"/>
</dbReference>
<dbReference type="Pfam" id="PF23174">
    <property type="entry name" value="bHLH_ILI"/>
    <property type="match status" value="1"/>
</dbReference>
<dbReference type="SUPFAM" id="SSF47459">
    <property type="entry name" value="HLH, helix-loop-helix DNA-binding domain"/>
    <property type="match status" value="1"/>
</dbReference>
<dbReference type="PROSITE" id="PS50888">
    <property type="entry name" value="BHLH"/>
    <property type="match status" value="1"/>
</dbReference>
<feature type="chain" id="PRO_0000429094" description="Transcription factor ILI4">
    <location>
        <begin position="1"/>
        <end position="87"/>
    </location>
</feature>
<feature type="domain" description="bHLH" evidence="1">
    <location>
        <begin position="1"/>
        <end position="54"/>
    </location>
</feature>
<keyword id="KW-1070">Brassinosteroid signaling pathway</keyword>
<keyword id="KW-0963">Cytoplasm</keyword>
<keyword id="KW-0341">Growth regulation</keyword>
<keyword id="KW-1185">Reference proteome</keyword>
<keyword id="KW-0804">Transcription</keyword>
<keyword id="KW-0805">Transcription regulation</keyword>
<comment type="function">
    <text evidence="2 4">Atypical and probable non DNA-binding bHLH transcription factor that acts as a positive regulator of brassinosteroid (BR) response (PubMed:19648232). Controls lamina inclination by participating in two BR signaling pathways involving BRI1 and RGA1 (PubMed:19648232). Involved in the RLI1-dependent modulation of leaf inclination by promoting lamina joint cell elongation, especially in response to phosphate (Pi) availability (PubMed:29610209).</text>
</comment>
<comment type="subunit">
    <text evidence="3">Interacts with LO9-177.</text>
</comment>
<comment type="subcellular location">
    <subcellularLocation>
        <location evidence="10">Cytoplasm</location>
    </subcellularLocation>
</comment>
<comment type="tissue specificity">
    <text evidence="2">Expressed in phloem of leaf blades and sheaths, lamina joints, filaments before anthesis, vasculare bundles of the ovule, lemma and palea, and embryos.</text>
</comment>
<comment type="induction">
    <text evidence="2 4">Triggered by the transcription factor RLI1 to regulate leaf inclination in response to phosphate (Pi) availability (PubMed:29610209). Repressed by phosphate (Pi) deficiency in lamina joint cells in a RLI1-dependent manner (PubMed:29610209). By brassinolide (BL, e.g. 24-epibrassinolide) (PubMed:19648232, PubMed:29610209). Repressed by abscisic acid (ABA) (PubMed:19648232).</text>
</comment>
<comment type="disruption phenotype">
    <text evidence="4">Erected leaves, with reduced lamina joint adaxial and abaxial sclerenchyma cell length.</text>
</comment>
<comment type="miscellaneous">
    <text evidence="3 10">Plants over-expressing ILI4 show enhanced bending of the lamina joint, increased grain size and resistance to brassinazole, an inhibitor of BR biosynthesis.</text>
</comment>
<comment type="similarity">
    <text>Belongs to the bHLH protein family.</text>
</comment>
<accession>Q0DDF6</accession>
<accession>A0A0P0WUS7</accession>
<evidence type="ECO:0000255" key="1">
    <source>
        <dbReference type="PROSITE-ProRule" id="PRU00981"/>
    </source>
</evidence>
<evidence type="ECO:0000269" key="2">
    <source>
    </source>
</evidence>
<evidence type="ECO:0000269" key="3">
    <source>
    </source>
</evidence>
<evidence type="ECO:0000269" key="4">
    <source>
    </source>
</evidence>
<evidence type="ECO:0000303" key="5">
    <source>
    </source>
</evidence>
<evidence type="ECO:0000303" key="6">
    <source>
    </source>
</evidence>
<evidence type="ECO:0000303" key="7">
    <source>
    </source>
</evidence>
<evidence type="ECO:0000303" key="8">
    <source>
    </source>
</evidence>
<evidence type="ECO:0000305" key="9"/>
<evidence type="ECO:0000305" key="10">
    <source>
    </source>
</evidence>
<evidence type="ECO:0000312" key="11">
    <source>
        <dbReference type="EMBL" id="EAZ36342.1"/>
    </source>
</evidence>
<reference key="1">
    <citation type="journal article" date="2005" name="Nature">
        <title>The map-based sequence of the rice genome.</title>
        <authorList>
            <consortium name="International rice genome sequencing project (IRGSP)"/>
        </authorList>
    </citation>
    <scope>NUCLEOTIDE SEQUENCE [LARGE SCALE GENOMIC DNA]</scope>
    <source>
        <strain>cv. Nipponbare</strain>
    </source>
</reference>
<reference key="2">
    <citation type="journal article" date="2008" name="Nucleic Acids Res.">
        <title>The rice annotation project database (RAP-DB): 2008 update.</title>
        <authorList>
            <consortium name="The rice annotation project (RAP)"/>
        </authorList>
    </citation>
    <scope>GENOME REANNOTATION</scope>
    <source>
        <strain>cv. Nipponbare</strain>
    </source>
</reference>
<reference key="3">
    <citation type="journal article" date="2013" name="Rice">
        <title>Improvement of the Oryza sativa Nipponbare reference genome using next generation sequence and optical map data.</title>
        <authorList>
            <person name="Kawahara Y."/>
            <person name="de la Bastide M."/>
            <person name="Hamilton J.P."/>
            <person name="Kanamori H."/>
            <person name="McCombie W.R."/>
            <person name="Ouyang S."/>
            <person name="Schwartz D.C."/>
            <person name="Tanaka T."/>
            <person name="Wu J."/>
            <person name="Zhou S."/>
            <person name="Childs K.L."/>
            <person name="Davidson R.M."/>
            <person name="Lin H."/>
            <person name="Quesada-Ocampo L."/>
            <person name="Vaillancourt B."/>
            <person name="Sakai H."/>
            <person name="Lee S.S."/>
            <person name="Kim J."/>
            <person name="Numa H."/>
            <person name="Itoh T."/>
            <person name="Buell C.R."/>
            <person name="Matsumoto T."/>
        </authorList>
    </citation>
    <scope>GENOME REANNOTATION</scope>
    <source>
        <strain>cv. Nipponbare</strain>
    </source>
</reference>
<reference key="4">
    <citation type="journal article" date="2005" name="PLoS Biol.">
        <title>The genomes of Oryza sativa: a history of duplications.</title>
        <authorList>
            <person name="Yu J."/>
            <person name="Wang J."/>
            <person name="Lin W."/>
            <person name="Li S."/>
            <person name="Li H."/>
            <person name="Zhou J."/>
            <person name="Ni P."/>
            <person name="Dong W."/>
            <person name="Hu S."/>
            <person name="Zeng C."/>
            <person name="Zhang J."/>
            <person name="Zhang Y."/>
            <person name="Li R."/>
            <person name="Xu Z."/>
            <person name="Li S."/>
            <person name="Li X."/>
            <person name="Zheng H."/>
            <person name="Cong L."/>
            <person name="Lin L."/>
            <person name="Yin J."/>
            <person name="Geng J."/>
            <person name="Li G."/>
            <person name="Shi J."/>
            <person name="Liu J."/>
            <person name="Lv H."/>
            <person name="Li J."/>
            <person name="Wang J."/>
            <person name="Deng Y."/>
            <person name="Ran L."/>
            <person name="Shi X."/>
            <person name="Wang X."/>
            <person name="Wu Q."/>
            <person name="Li C."/>
            <person name="Ren X."/>
            <person name="Wang J."/>
            <person name="Wang X."/>
            <person name="Li D."/>
            <person name="Liu D."/>
            <person name="Zhang X."/>
            <person name="Ji Z."/>
            <person name="Zhao W."/>
            <person name="Sun Y."/>
            <person name="Zhang Z."/>
            <person name="Bao J."/>
            <person name="Han Y."/>
            <person name="Dong L."/>
            <person name="Ji J."/>
            <person name="Chen P."/>
            <person name="Wu S."/>
            <person name="Liu J."/>
            <person name="Xiao Y."/>
            <person name="Bu D."/>
            <person name="Tan J."/>
            <person name="Yang L."/>
            <person name="Ye C."/>
            <person name="Zhang J."/>
            <person name="Xu J."/>
            <person name="Zhou Y."/>
            <person name="Yu Y."/>
            <person name="Zhang B."/>
            <person name="Zhuang S."/>
            <person name="Wei H."/>
            <person name="Liu B."/>
            <person name="Lei M."/>
            <person name="Yu H."/>
            <person name="Li Y."/>
            <person name="Xu H."/>
            <person name="Wei S."/>
            <person name="He X."/>
            <person name="Fang L."/>
            <person name="Zhang Z."/>
            <person name="Zhang Y."/>
            <person name="Huang X."/>
            <person name="Su Z."/>
            <person name="Tong W."/>
            <person name="Li J."/>
            <person name="Tong Z."/>
            <person name="Li S."/>
            <person name="Ye J."/>
            <person name="Wang L."/>
            <person name="Fang L."/>
            <person name="Lei T."/>
            <person name="Chen C.-S."/>
            <person name="Chen H.-C."/>
            <person name="Xu Z."/>
            <person name="Li H."/>
            <person name="Huang H."/>
            <person name="Zhang F."/>
            <person name="Xu H."/>
            <person name="Li N."/>
            <person name="Zhao C."/>
            <person name="Li S."/>
            <person name="Dong L."/>
            <person name="Huang Y."/>
            <person name="Li L."/>
            <person name="Xi Y."/>
            <person name="Qi Q."/>
            <person name="Li W."/>
            <person name="Zhang B."/>
            <person name="Hu W."/>
            <person name="Zhang Y."/>
            <person name="Tian X."/>
            <person name="Jiao Y."/>
            <person name="Liang X."/>
            <person name="Jin J."/>
            <person name="Gao L."/>
            <person name="Zheng W."/>
            <person name="Hao B."/>
            <person name="Liu S.-M."/>
            <person name="Wang W."/>
            <person name="Yuan L."/>
            <person name="Cao M."/>
            <person name="McDermott J."/>
            <person name="Samudrala R."/>
            <person name="Wang J."/>
            <person name="Wong G.K.-S."/>
            <person name="Yang H."/>
        </authorList>
    </citation>
    <scope>NUCLEOTIDE SEQUENCE [LARGE SCALE GENOMIC DNA]</scope>
    <source>
        <strain>cv. Nipponbare</strain>
    </source>
</reference>
<reference key="5">
    <citation type="journal article" date="2003" name="Science">
        <title>Collection, mapping, and annotation of over 28,000 cDNA clones from japonica rice.</title>
        <authorList>
            <consortium name="The rice full-length cDNA consortium"/>
        </authorList>
    </citation>
    <scope>NUCLEOTIDE SEQUENCE [LARGE SCALE MRNA]</scope>
    <source>
        <strain>cv. Nipponbare</strain>
    </source>
</reference>
<reference key="6">
    <citation type="journal article" date="2009" name="Plant Physiol.">
        <title>BRASSINOSTEROID UPREGULATED1, encoding a helix-loop-helix protein, is a novel gene involved in brassinosteroid signaling and controls bending of the lamina joint in rice.</title>
        <authorList>
            <person name="Tanaka A."/>
            <person name="Nakagawa H."/>
            <person name="Tomita C."/>
            <person name="Shimatani Z."/>
            <person name="Ohtake M."/>
            <person name="Nomura T."/>
            <person name="Jiang C.J."/>
            <person name="Dubouzet J.G."/>
            <person name="Kikuchi S."/>
            <person name="Sekimoto H."/>
            <person name="Yokota T."/>
            <person name="Asami T."/>
            <person name="Kamakura T."/>
            <person name="Mori M."/>
        </authorList>
    </citation>
    <scope>FUNCTION</scope>
    <scope>SUBCELLULAR LOCATION</scope>
    <scope>TISSUE SPECIFICITY</scope>
    <scope>INDUCTION</scope>
</reference>
<reference key="7">
    <citation type="journal article" date="2010" name="Plant Physiol.">
        <title>Genome-wide classification and evolutionary analysis of the bHLH family of transcription factors in Arabidopsis, poplar, rice, moss, and algae.</title>
        <authorList>
            <person name="Carretero-Paulet L."/>
            <person name="Galstyan A."/>
            <person name="Roig-Villanova I."/>
            <person name="Martinez-Garcia J.F."/>
            <person name="Bilbao-Castro J.R."/>
            <person name="Robertson D.L."/>
        </authorList>
    </citation>
    <scope>GENE FAMILY</scope>
    <scope>NOMENCLATURE</scope>
</reference>
<reference key="8">
    <citation type="journal article" date="2017" name="Plant Physiol.">
        <title>Rice leaf angle and grain size are affected by the OsBUL1 transcriptional activator complex.</title>
        <authorList>
            <person name="Jang S."/>
            <person name="An G."/>
            <person name="Li H.-Y."/>
        </authorList>
    </citation>
    <scope>INTERACTION WITH LO9-177</scope>
</reference>
<reference key="9">
    <citation type="journal article" date="2018" name="Plant Cell">
        <title>An SPX-RLI1 module regulates leaf inclination in response to phosphate availability in rice.</title>
        <authorList>
            <person name="Ruan W."/>
            <person name="Guo M."/>
            <person name="Xu L."/>
            <person name="Wang X."/>
            <person name="Zhao H."/>
            <person name="Wang J."/>
            <person name="Yi K."/>
        </authorList>
    </citation>
    <scope>FUNCTION</scope>
    <scope>INDUCTION BY RLI1 AND BRASSINOLIDE</scope>
    <scope>DISRUPTION PHENOTYPE</scope>
    <scope>REPRESSION BY PHOSPHATE DEPRIVATION</scope>
    <source>
        <strain>cv. Nipponbare</strain>
    </source>
</reference>
<protein>
    <recommendedName>
        <fullName>Transcription factor ILI4</fullName>
        <shortName>OsILI4</shortName>
    </recommendedName>
    <alternativeName>
        <fullName evidence="6">Basic helix-loop-helix protein 172</fullName>
        <shortName evidence="6">OsbHLH172</shortName>
    </alternativeName>
    <alternativeName>
        <fullName evidence="5 7 8">Protein BRASSINOSTEROID UP-REGULATED 1</fullName>
        <shortName evidence="7">OsBU1</shortName>
    </alternativeName>
    <alternativeName>
        <fullName>Protein INCREASED LEAF INCLINATION 4</fullName>
    </alternativeName>
    <alternativeName>
        <fullName evidence="6">bHLH transcription factor bHLH172</fullName>
    </alternativeName>
</protein>
<sequence>MSSRRSSRSSVSEEEINELISKLQSLLPSSRRRGANQASTTKLLKETCSYIKSLHREVDDLSDRLSDLMAGMDHNSPGAEIIRSLLR</sequence>
<organism>
    <name type="scientific">Oryza sativa subsp. japonica</name>
    <name type="common">Rice</name>
    <dbReference type="NCBI Taxonomy" id="39947"/>
    <lineage>
        <taxon>Eukaryota</taxon>
        <taxon>Viridiplantae</taxon>
        <taxon>Streptophyta</taxon>
        <taxon>Embryophyta</taxon>
        <taxon>Tracheophyta</taxon>
        <taxon>Spermatophyta</taxon>
        <taxon>Magnoliopsida</taxon>
        <taxon>Liliopsida</taxon>
        <taxon>Poales</taxon>
        <taxon>Poaceae</taxon>
        <taxon>BOP clade</taxon>
        <taxon>Oryzoideae</taxon>
        <taxon>Oryzeae</taxon>
        <taxon>Oryzinae</taxon>
        <taxon>Oryza</taxon>
        <taxon>Oryza sativa</taxon>
    </lineage>
</organism>